<name>3SA9_NAJNA</name>
<sequence>VVTIVCLDLGYTLKCNKLVPLFYKTCPAGKNLCYKMYMVATPKVPVKRGCIDVCPKSSLLVKYVCCNTDRCN</sequence>
<dbReference type="EMBL" id="LC015651">
    <property type="protein sequence ID" value="BAU24665.1"/>
    <property type="molecule type" value="mRNA"/>
</dbReference>
<dbReference type="SMR" id="A0A0U5AUY6"/>
<dbReference type="Proteomes" id="UP000694559">
    <property type="component" value="Unplaced"/>
</dbReference>
<dbReference type="GO" id="GO:0005576">
    <property type="term" value="C:extracellular region"/>
    <property type="evidence" value="ECO:0007669"/>
    <property type="project" value="UniProtKB-SubCell"/>
</dbReference>
<dbReference type="GO" id="GO:0090729">
    <property type="term" value="F:toxin activity"/>
    <property type="evidence" value="ECO:0007669"/>
    <property type="project" value="UniProtKB-KW"/>
</dbReference>
<dbReference type="GO" id="GO:0031640">
    <property type="term" value="P:killing of cells of another organism"/>
    <property type="evidence" value="ECO:0007669"/>
    <property type="project" value="UniProtKB-KW"/>
</dbReference>
<dbReference type="CDD" id="cd00206">
    <property type="entry name" value="TFP_snake_toxin"/>
    <property type="match status" value="1"/>
</dbReference>
<dbReference type="FunFam" id="2.10.60.10:FF:000024">
    <property type="entry name" value="Cytotoxin 1"/>
    <property type="match status" value="1"/>
</dbReference>
<dbReference type="Gene3D" id="2.10.60.10">
    <property type="entry name" value="CD59"/>
    <property type="match status" value="1"/>
</dbReference>
<dbReference type="InterPro" id="IPR003572">
    <property type="entry name" value="Cytotoxin_Cobra"/>
</dbReference>
<dbReference type="InterPro" id="IPR003571">
    <property type="entry name" value="Snake_3FTx"/>
</dbReference>
<dbReference type="InterPro" id="IPR045860">
    <property type="entry name" value="Snake_toxin-like_sf"/>
</dbReference>
<dbReference type="InterPro" id="IPR018354">
    <property type="entry name" value="Snake_toxin_con_site"/>
</dbReference>
<dbReference type="InterPro" id="IPR054131">
    <property type="entry name" value="Toxin_cobra-type"/>
</dbReference>
<dbReference type="Pfam" id="PF21947">
    <property type="entry name" value="Toxin_cobra-type"/>
    <property type="match status" value="1"/>
</dbReference>
<dbReference type="PRINTS" id="PR00282">
    <property type="entry name" value="CYTOTOXIN"/>
</dbReference>
<dbReference type="SUPFAM" id="SSF57302">
    <property type="entry name" value="Snake toxin-like"/>
    <property type="match status" value="1"/>
</dbReference>
<dbReference type="PROSITE" id="PS00272">
    <property type="entry name" value="SNAKE_TOXIN"/>
    <property type="match status" value="1"/>
</dbReference>
<comment type="function">
    <text evidence="2 3 7">Shows cytolytic activity on many different cells by forming a pore in lipid membranes. In vivo, increases heart rate or kills the animal by cardiac arrest. In addition, it binds to heparin with high affinity, interacts with Kv channel-interacting protein 1 (KCNIP1) in a calcium-independent manner, and binds to integrin alpha-V/beta-3 (ITGAV/ITGB3) with moderate affinity (By similarity). Preferentially binds acidic phospholipids like phosphatidylserine, phosphatidic acid and phosphatidyl glycerol (PubMed:26456928). Has hemolytic activity towards human erythrocytes (EC(50)=0.171 uM) and cytolytic activity towards various cell lines (PubMed:26456928).</text>
</comment>
<comment type="subunit">
    <text evidence="2">Monomer in solution; Homodimer and oligomer in the presence of negatively charged lipids forming a pore with a size ranging between 20 and 30 Angstroms.</text>
</comment>
<comment type="subcellular location">
    <subcellularLocation>
        <location evidence="4 5 6 7">Secreted</location>
    </subcellularLocation>
</comment>
<comment type="tissue specificity">
    <text evidence="10">Expressed by the venom gland.</text>
</comment>
<comment type="miscellaneous">
    <text evidence="10">Is classified as a P-type cytotoxin, since a proline residue stands at position 42 (Pro-31 in standard classification).</text>
</comment>
<comment type="similarity">
    <text evidence="10">Belongs to the three-finger toxin family. Short-chain subfamily. Type IA cytotoxin sub-subfamily.</text>
</comment>
<proteinExistence type="evidence at protein level"/>
<protein>
    <recommendedName>
        <fullName evidence="13">Cytotoxin 9</fullName>
        <shortName evidence="13">CTX9</shortName>
    </recommendedName>
</protein>
<organism evidence="13">
    <name type="scientific">Naja naja</name>
    <name type="common">Indian cobra</name>
    <dbReference type="NCBI Taxonomy" id="35670"/>
    <lineage>
        <taxon>Eukaryota</taxon>
        <taxon>Metazoa</taxon>
        <taxon>Chordata</taxon>
        <taxon>Craniata</taxon>
        <taxon>Vertebrata</taxon>
        <taxon>Euteleostomi</taxon>
        <taxon>Lepidosauria</taxon>
        <taxon>Squamata</taxon>
        <taxon>Bifurcata</taxon>
        <taxon>Unidentata</taxon>
        <taxon>Episquamata</taxon>
        <taxon>Toxicofera</taxon>
        <taxon>Serpentes</taxon>
        <taxon>Colubroidea</taxon>
        <taxon>Elapidae</taxon>
        <taxon>Elapinae</taxon>
        <taxon>Naja</taxon>
    </lineage>
</organism>
<keyword id="KW-0123">Cardiotoxin</keyword>
<keyword id="KW-0204">Cytolysis</keyword>
<keyword id="KW-0903">Direct protein sequencing</keyword>
<keyword id="KW-1015">Disulfide bond</keyword>
<keyword id="KW-1185">Reference proteome</keyword>
<keyword id="KW-0964">Secreted</keyword>
<keyword id="KW-0732">Signal</keyword>
<keyword id="KW-0800">Toxin</keyword>
<evidence type="ECO:0000250" key="1">
    <source>
        <dbReference type="UniProtKB" id="P01440"/>
    </source>
</evidence>
<evidence type="ECO:0000250" key="2">
    <source>
        <dbReference type="UniProtKB" id="P60301"/>
    </source>
</evidence>
<evidence type="ECO:0000250" key="3">
    <source>
        <dbReference type="UniProtKB" id="P60304"/>
    </source>
</evidence>
<evidence type="ECO:0000255" key="4"/>
<evidence type="ECO:0000255" key="5">
    <source>
        <dbReference type="RuleBase" id="RU003614"/>
    </source>
</evidence>
<evidence type="ECO:0000269" key="6">
    <source>
    </source>
</evidence>
<evidence type="ECO:0000269" key="7">
    <source>
    </source>
</evidence>
<evidence type="ECO:0000303" key="8">
    <source>
    </source>
</evidence>
<evidence type="ECO:0000303" key="9">
    <source>
    </source>
</evidence>
<evidence type="ECO:0000305" key="10"/>
<evidence type="ECO:0000305" key="11">
    <source>
    </source>
</evidence>
<evidence type="ECO:0000305" key="12">
    <source>
    </source>
</evidence>
<evidence type="ECO:0000312" key="13">
    <source>
        <dbReference type="EMBL" id="BAU24665.1"/>
    </source>
</evidence>
<feature type="signal peptide" evidence="11 12">
    <location>
        <begin position="1" status="less than"/>
        <end position="12"/>
    </location>
</feature>
<feature type="chain" id="PRO_0000436849" description="Cytotoxin 9" evidence="7">
    <location>
        <begin position="13"/>
        <end position="72"/>
    </location>
</feature>
<feature type="disulfide bond" evidence="1">
    <location>
        <begin position="15"/>
        <end position="33"/>
    </location>
</feature>
<feature type="disulfide bond" evidence="1">
    <location>
        <begin position="26"/>
        <end position="50"/>
    </location>
</feature>
<feature type="disulfide bond" evidence="1">
    <location>
        <begin position="54"/>
        <end position="65"/>
    </location>
</feature>
<feature type="disulfide bond" evidence="1">
    <location>
        <begin position="66"/>
        <end position="71"/>
    </location>
</feature>
<feature type="non-terminal residue" evidence="13">
    <location>
        <position position="1"/>
    </location>
</feature>
<accession>A0A0U5AUY6</accession>
<accession>C0HJU1</accession>
<reference evidence="10" key="1">
    <citation type="journal article" date="2016" name="Comp. Biochem. Physiol.">
        <title>Comparison of the primary structures, cytotoxicities, and affinities to phospholipids of five kinds of cytotoxins from the venom of Indian cobra, Naja naja.</title>
        <authorList>
            <person name="Suzuki-Matsubara M."/>
            <person name="Athauda S.B.P."/>
            <person name="Suzuki Y."/>
            <person name="Matsubara R.A.K."/>
            <person name="Moriyama A."/>
        </authorList>
    </citation>
    <scope>NUCLEOTIDE SEQUENCE [MRNA]</scope>
    <scope>PROTEIN SEQUENCE OF 13-72</scope>
    <scope>FUNCTION</scope>
    <scope>SUBCELLULAR LOCATION</scope>
    <source>
        <tissue evidence="9">Venom</tissue>
        <tissue evidence="13">Venom gland</tissue>
    </source>
</reference>
<reference evidence="10" key="2">
    <citation type="journal article" date="2010" name="Biomed. Res.">
        <title>Molecular diversity in venom proteins of the Russell's viper (Daboia russellii russellii) and the Indian cobra (Naja naja) in Sri Lanka.</title>
        <authorList>
            <person name="Suzuki M."/>
            <person name="Itoh T."/>
            <person name="Bandaranayake B.M.A.I.K."/>
            <person name="Ranasinghe J.G."/>
            <person name="Athauda S.B."/>
            <person name="Moriyama A."/>
        </authorList>
    </citation>
    <scope>PROTEIN SEQUENCE OF 13-42</scope>
    <scope>SUBCELLULAR LOCATION</scope>
    <source>
        <tissue evidence="8">Venom</tissue>
    </source>
</reference>